<comment type="function">
    <text evidence="1">Probably involved in membrane protein trafficking.</text>
</comment>
<comment type="interaction">
    <interactant intactId="EBI-4403649">
        <id>Q969E2</id>
    </interactant>
    <interactant intactId="EBI-3916106">
        <id>Q9BV23</id>
        <label>ABHD6</label>
    </interactant>
    <organismsDiffer>false</organismsDiffer>
    <experiments>3</experiments>
</comment>
<comment type="interaction">
    <interactant intactId="EBI-4403649">
        <id>Q969E2</id>
    </interactant>
    <interactant intactId="EBI-13059134">
        <id>Q13520</id>
        <label>AQP6</label>
    </interactant>
    <organismsDiffer>false</organismsDiffer>
    <experiments>3</experiments>
</comment>
<comment type="interaction">
    <interactant intactId="EBI-4403649">
        <id>Q969E2</id>
    </interactant>
    <interactant intactId="EBI-700794">
        <id>Q13323</id>
        <label>BIK</label>
    </interactant>
    <organismsDiffer>false</organismsDiffer>
    <experiments>3</experiments>
</comment>
<comment type="interaction">
    <interactant intactId="EBI-4403649">
        <id>Q969E2</id>
    </interactant>
    <interactant intactId="EBI-2130213">
        <id>Q99675</id>
        <label>CGRRF1</label>
    </interactant>
    <organismsDiffer>false</organismsDiffer>
    <experiments>3</experiments>
</comment>
<comment type="interaction">
    <interactant intactId="EBI-4403649">
        <id>Q969E2</id>
    </interactant>
    <interactant intactId="EBI-740744">
        <id>O95471</id>
        <label>CLDN7</label>
    </interactant>
    <organismsDiffer>false</organismsDiffer>
    <experiments>3</experiments>
</comment>
<comment type="interaction">
    <interactant intactId="EBI-4403649">
        <id>Q969E2</id>
    </interactant>
    <interactant intactId="EBI-3915253">
        <id>Q15125</id>
        <label>EBP</label>
    </interactant>
    <organismsDiffer>false</organismsDiffer>
    <experiments>3</experiments>
</comment>
<comment type="interaction">
    <interactant intactId="EBI-4403649">
        <id>Q969E2</id>
    </interactant>
    <interactant intactId="EBI-17640610">
        <id>P34910-2</id>
        <label>EVI2B</label>
    </interactant>
    <organismsDiffer>false</organismsDiffer>
    <experiments>3</experiments>
</comment>
<comment type="interaction">
    <interactant intactId="EBI-4403649">
        <id>Q969E2</id>
    </interactant>
    <interactant intactId="EBI-13345167">
        <id>Q8TDT2</id>
        <label>GPR152</label>
    </interactant>
    <organismsDiffer>false</organismsDiffer>
    <experiments>3</experiments>
</comment>
<comment type="interaction">
    <interactant intactId="EBI-4403649">
        <id>Q969E2</id>
    </interactant>
    <interactant intactId="EBI-15639515">
        <id>O15354</id>
        <label>GPR37</label>
    </interactant>
    <organismsDiffer>false</organismsDiffer>
    <experiments>3</experiments>
</comment>
<comment type="interaction">
    <interactant intactId="EBI-4403649">
        <id>Q969E2</id>
    </interactant>
    <interactant intactId="EBI-747754">
        <id>P28799</id>
        <label>GRN</label>
    </interactant>
    <organismsDiffer>false</organismsDiffer>
    <experiments>3</experiments>
</comment>
<comment type="interaction">
    <interactant intactId="EBI-4403649">
        <id>Q969E2</id>
    </interactant>
    <interactant intactId="EBI-25860013">
        <id>P28799-2</id>
        <label>GRN</label>
    </interactant>
    <organismsDiffer>false</organismsDiffer>
    <experiments>3</experiments>
</comment>
<comment type="interaction">
    <interactant intactId="EBI-4403649">
        <id>Q969E2</id>
    </interactant>
    <interactant intactId="EBI-12017638">
        <id>P48051</id>
        <label>KCNJ6</label>
    </interactant>
    <organismsDiffer>false</organismsDiffer>
    <experiments>3</experiments>
</comment>
<comment type="interaction">
    <interactant intactId="EBI-4403649">
        <id>Q969E2</id>
    </interactant>
    <interactant intactId="EBI-724076">
        <id>Q99750</id>
        <label>MDFI</label>
    </interactant>
    <organismsDiffer>false</organismsDiffer>
    <experiments>3</experiments>
</comment>
<comment type="interaction">
    <interactant intactId="EBI-4403649">
        <id>Q969E2</id>
    </interactant>
    <interactant intactId="EBI-3923031">
        <id>Q14973</id>
        <label>SLC10A1</label>
    </interactant>
    <organismsDiffer>false</organismsDiffer>
    <experiments>3</experiments>
</comment>
<comment type="interaction">
    <interactant intactId="EBI-4403649">
        <id>Q969E2</id>
    </interactant>
    <interactant intactId="EBI-18159983">
        <id>Q3KNW5</id>
        <label>SLC10A6</label>
    </interactant>
    <organismsDiffer>false</organismsDiffer>
    <experiments>3</experiments>
</comment>
<comment type="interaction">
    <interactant intactId="EBI-4403649">
        <id>Q969E2</id>
    </interactant>
    <interactant intactId="EBI-10819434">
        <id>Q9NPE6</id>
        <label>SPAG4</label>
    </interactant>
    <organismsDiffer>false</organismsDiffer>
    <experiments>3</experiments>
</comment>
<comment type="interaction">
    <interactant intactId="EBI-4403649">
        <id>Q969E2</id>
    </interactant>
    <interactant intactId="EBI-348587">
        <id>Q9BVK8</id>
        <label>TMEM147</label>
    </interactant>
    <organismsDiffer>false</organismsDiffer>
    <experiments>3</experiments>
</comment>
<comment type="interaction">
    <interactant intactId="EBI-4403649">
        <id>Q969E2</id>
    </interactant>
    <interactant intactId="EBI-720609">
        <id>O76024</id>
        <label>WFS1</label>
    </interactant>
    <organismsDiffer>false</organismsDiffer>
    <experiments>3</experiments>
</comment>
<comment type="subcellular location">
    <subcellularLocation>
        <location>Membrane</location>
        <topology>Multi-pass membrane protein</topology>
    </subcellularLocation>
</comment>
<comment type="alternative products">
    <event type="alternative splicing"/>
    <isoform>
        <id>Q969E2-1</id>
        <name>1</name>
        <sequence type="displayed"/>
    </isoform>
    <isoform>
        <id>Q969E2-2</id>
        <name>2</name>
        <sequence type="described" ref="VSP_026446"/>
    </isoform>
    <isoform>
        <id>Q969E2-3</id>
        <name>3</name>
        <sequence type="described" ref="VSP_026447"/>
    </isoform>
</comment>
<comment type="similarity">
    <text evidence="5">Belongs to the SCAMP family.</text>
</comment>
<feature type="chain" id="PRO_0000191259" description="Secretory carrier-associated membrane protein 4">
    <location>
        <begin position="1"/>
        <end position="229"/>
    </location>
</feature>
<feature type="topological domain" description="Cytoplasmic" evidence="2">
    <location>
        <begin position="1"/>
        <end position="39"/>
    </location>
</feature>
<feature type="transmembrane region" description="Helical" evidence="2">
    <location>
        <begin position="40"/>
        <end position="60"/>
    </location>
</feature>
<feature type="transmembrane region" description="Helical" evidence="2">
    <location>
        <begin position="61"/>
        <end position="81"/>
    </location>
</feature>
<feature type="transmembrane region" description="Helical" evidence="2">
    <location>
        <begin position="105"/>
        <end position="125"/>
    </location>
</feature>
<feature type="transmembrane region" description="Helical" evidence="2">
    <location>
        <begin position="149"/>
        <end position="169"/>
    </location>
</feature>
<feature type="topological domain" description="Cytoplasmic" evidence="2">
    <location>
        <begin position="170"/>
        <end position="229"/>
    </location>
</feature>
<feature type="region of interest" description="Disordered" evidence="3">
    <location>
        <begin position="208"/>
        <end position="229"/>
    </location>
</feature>
<feature type="modified residue" description="Phosphothreonine" evidence="6">
    <location>
        <position position="194"/>
    </location>
</feature>
<feature type="splice variant" id="VSP_026446" description="In isoform 2." evidence="4">
    <location>
        <begin position="99"/>
        <end position="132"/>
    </location>
</feature>
<feature type="splice variant" id="VSP_026447" description="In isoform 3." evidence="4">
    <original>CGWLSAIGFFQYSPGAAVVMLLPAIMFSVSAAMMAIAIMKVHRIYRGAGGSFQKAQTEWNTGTWRNPPSREAQYNNFSGNSLPEYPTVPSYPGSGQWP</original>
    <variation>G</variation>
    <location>
        <begin position="132"/>
        <end position="229"/>
    </location>
</feature>
<feature type="sequence variant" id="VAR_061783" description="In dbSNP:rs45562539.">
    <original>A</original>
    <variation>T</variation>
    <location>
        <position position="49"/>
    </location>
</feature>
<protein>
    <recommendedName>
        <fullName>Secretory carrier-associated membrane protein 4</fullName>
        <shortName>Secretory carrier membrane protein 4</shortName>
    </recommendedName>
</protein>
<evidence type="ECO:0000250" key="1"/>
<evidence type="ECO:0000255" key="2"/>
<evidence type="ECO:0000256" key="3">
    <source>
        <dbReference type="SAM" id="MobiDB-lite"/>
    </source>
</evidence>
<evidence type="ECO:0000303" key="4">
    <source>
    </source>
</evidence>
<evidence type="ECO:0000305" key="5"/>
<evidence type="ECO:0007744" key="6">
    <source>
    </source>
</evidence>
<dbReference type="EMBL" id="AK074586">
    <property type="protein sequence ID" value="BAC11075.1"/>
    <property type="molecule type" value="mRNA"/>
</dbReference>
<dbReference type="EMBL" id="AK074967">
    <property type="protein sequence ID" value="BAC11322.1"/>
    <property type="molecule type" value="mRNA"/>
</dbReference>
<dbReference type="EMBL" id="AK092056">
    <property type="protein sequence ID" value="BAC03797.1"/>
    <property type="molecule type" value="mRNA"/>
</dbReference>
<dbReference type="EMBL" id="BC011747">
    <property type="protein sequence ID" value="AAH11747.1"/>
    <property type="molecule type" value="mRNA"/>
</dbReference>
<dbReference type="EMBL" id="BC016509">
    <property type="protein sequence ID" value="AAH16509.1"/>
    <property type="molecule type" value="mRNA"/>
</dbReference>
<dbReference type="EMBL" id="BC062598">
    <property type="protein sequence ID" value="AAH62598.1"/>
    <property type="molecule type" value="mRNA"/>
</dbReference>
<dbReference type="CCDS" id="CCDS45903.1">
    <molecule id="Q969E2-1"/>
</dbReference>
<dbReference type="CCDS" id="CCDS86689.1">
    <molecule id="Q969E2-2"/>
</dbReference>
<dbReference type="RefSeq" id="NP_001316468.1">
    <property type="nucleotide sequence ID" value="NM_001329539.1"/>
</dbReference>
<dbReference type="RefSeq" id="NP_001316469.1">
    <molecule id="Q969E2-2"/>
    <property type="nucleotide sequence ID" value="NM_001329540.2"/>
</dbReference>
<dbReference type="RefSeq" id="NP_524558.1">
    <molecule id="Q969E2-1"/>
    <property type="nucleotide sequence ID" value="NM_079834.4"/>
</dbReference>
<dbReference type="BioGRID" id="125230">
    <property type="interactions" value="55"/>
</dbReference>
<dbReference type="FunCoup" id="Q969E2">
    <property type="interactions" value="480"/>
</dbReference>
<dbReference type="IntAct" id="Q969E2">
    <property type="interactions" value="34"/>
</dbReference>
<dbReference type="MINT" id="Q969E2"/>
<dbReference type="STRING" id="9606.ENSP00000316007"/>
<dbReference type="TCDB" id="8.A.103.1.4">
    <property type="family name" value="the secretory carrier-associated membrane protein (scamp) family"/>
</dbReference>
<dbReference type="GlyGen" id="Q969E2">
    <property type="glycosylation" value="1 site, 1 O-linked glycan (1 site)"/>
</dbReference>
<dbReference type="iPTMnet" id="Q969E2"/>
<dbReference type="PhosphoSitePlus" id="Q969E2"/>
<dbReference type="SwissPalm" id="Q969E2"/>
<dbReference type="BioMuta" id="SCAMP4"/>
<dbReference type="DMDM" id="47117277"/>
<dbReference type="jPOST" id="Q969E2"/>
<dbReference type="MassIVE" id="Q969E2"/>
<dbReference type="PaxDb" id="9606-ENSP00000316007"/>
<dbReference type="PeptideAtlas" id="Q969E2"/>
<dbReference type="ProteomicsDB" id="75740">
    <molecule id="Q969E2-1"/>
</dbReference>
<dbReference type="ProteomicsDB" id="75741">
    <molecule id="Q969E2-2"/>
</dbReference>
<dbReference type="ProteomicsDB" id="75742">
    <molecule id="Q969E2-3"/>
</dbReference>
<dbReference type="Pumba" id="Q969E2"/>
<dbReference type="Antibodypedia" id="22844">
    <property type="antibodies" value="82 antibodies from 22 providers"/>
</dbReference>
<dbReference type="DNASU" id="113178"/>
<dbReference type="Ensembl" id="ENST00000316097.13">
    <molecule id="Q969E2-1"/>
    <property type="protein sequence ID" value="ENSP00000316007.7"/>
    <property type="gene ID" value="ENSG00000227500.11"/>
</dbReference>
<dbReference type="Ensembl" id="ENST00000409472.6">
    <molecule id="Q969E2-2"/>
    <property type="protein sequence ID" value="ENSP00000386865.1"/>
    <property type="gene ID" value="ENSG00000227500.11"/>
</dbReference>
<dbReference type="Ensembl" id="ENST00000621748.1">
    <molecule id="Q969E2-1"/>
    <property type="protein sequence ID" value="ENSP00000479083.1"/>
    <property type="gene ID" value="ENSG00000227500.11"/>
</dbReference>
<dbReference type="GeneID" id="113178"/>
<dbReference type="KEGG" id="hsa:113178"/>
<dbReference type="MANE-Select" id="ENST00000316097.13">
    <property type="protein sequence ID" value="ENSP00000316007.7"/>
    <property type="RefSeq nucleotide sequence ID" value="NM_079834.4"/>
    <property type="RefSeq protein sequence ID" value="NP_524558.1"/>
</dbReference>
<dbReference type="UCSC" id="uc002luj.5">
    <molecule id="Q969E2-1"/>
    <property type="organism name" value="human"/>
</dbReference>
<dbReference type="AGR" id="HGNC:30385"/>
<dbReference type="CTD" id="113178"/>
<dbReference type="DisGeNET" id="113178"/>
<dbReference type="GeneCards" id="SCAMP4"/>
<dbReference type="HGNC" id="HGNC:30385">
    <property type="gene designation" value="SCAMP4"/>
</dbReference>
<dbReference type="HPA" id="ENSG00000227500">
    <property type="expression patterns" value="Low tissue specificity"/>
</dbReference>
<dbReference type="MalaCards" id="SCAMP4"/>
<dbReference type="MIM" id="613764">
    <property type="type" value="gene"/>
</dbReference>
<dbReference type="neXtProt" id="NX_Q969E2"/>
<dbReference type="OpenTargets" id="ENSG00000227500"/>
<dbReference type="PharmGKB" id="PA134983341"/>
<dbReference type="VEuPathDB" id="HostDB:ENSG00000227500"/>
<dbReference type="eggNOG" id="KOG3088">
    <property type="taxonomic scope" value="Eukaryota"/>
</dbReference>
<dbReference type="GeneTree" id="ENSGT00940000162150"/>
<dbReference type="HOGENOM" id="CLU_066546_1_0_1"/>
<dbReference type="InParanoid" id="Q969E2"/>
<dbReference type="OMA" id="YPTGNQW"/>
<dbReference type="OrthoDB" id="242866at2759"/>
<dbReference type="PAN-GO" id="Q969E2">
    <property type="GO annotations" value="3 GO annotations based on evolutionary models"/>
</dbReference>
<dbReference type="PhylomeDB" id="Q969E2"/>
<dbReference type="TreeFam" id="TF313797"/>
<dbReference type="PathwayCommons" id="Q969E2"/>
<dbReference type="SignaLink" id="Q969E2"/>
<dbReference type="BioGRID-ORCS" id="113178">
    <property type="hits" value="22 hits in 1146 CRISPR screens"/>
</dbReference>
<dbReference type="ChiTaRS" id="SCAMP4">
    <property type="organism name" value="human"/>
</dbReference>
<dbReference type="GenomeRNAi" id="113178"/>
<dbReference type="Pharos" id="Q969E2">
    <property type="development level" value="Tbio"/>
</dbReference>
<dbReference type="PRO" id="PR:Q969E2"/>
<dbReference type="Proteomes" id="UP000005640">
    <property type="component" value="Chromosome 19"/>
</dbReference>
<dbReference type="RNAct" id="Q969E2">
    <property type="molecule type" value="protein"/>
</dbReference>
<dbReference type="Bgee" id="ENSG00000227500">
    <property type="expression patterns" value="Expressed in right uterine tube and 141 other cell types or tissues"/>
</dbReference>
<dbReference type="ExpressionAtlas" id="Q969E2">
    <property type="expression patterns" value="baseline and differential"/>
</dbReference>
<dbReference type="GO" id="GO:0055038">
    <property type="term" value="C:recycling endosome membrane"/>
    <property type="evidence" value="ECO:0000318"/>
    <property type="project" value="GO_Central"/>
</dbReference>
<dbReference type="GO" id="GO:0032588">
    <property type="term" value="C:trans-Golgi network membrane"/>
    <property type="evidence" value="ECO:0000318"/>
    <property type="project" value="GO_Central"/>
</dbReference>
<dbReference type="GO" id="GO:0015031">
    <property type="term" value="P:protein transport"/>
    <property type="evidence" value="ECO:0000318"/>
    <property type="project" value="GO_Central"/>
</dbReference>
<dbReference type="InterPro" id="IPR007273">
    <property type="entry name" value="SCAMP"/>
</dbReference>
<dbReference type="PANTHER" id="PTHR10687:SF11">
    <property type="entry name" value="SECRETORY CARRIER-ASSOCIATED MEMBRANE PROTEIN 4"/>
    <property type="match status" value="1"/>
</dbReference>
<dbReference type="PANTHER" id="PTHR10687">
    <property type="entry name" value="SECRETORY CARRIER-ASSOCIATED MEMBRANE PROTEIN SCAMP"/>
    <property type="match status" value="1"/>
</dbReference>
<dbReference type="Pfam" id="PF04144">
    <property type="entry name" value="SCAMP"/>
    <property type="match status" value="1"/>
</dbReference>
<organism>
    <name type="scientific">Homo sapiens</name>
    <name type="common">Human</name>
    <dbReference type="NCBI Taxonomy" id="9606"/>
    <lineage>
        <taxon>Eukaryota</taxon>
        <taxon>Metazoa</taxon>
        <taxon>Chordata</taxon>
        <taxon>Craniata</taxon>
        <taxon>Vertebrata</taxon>
        <taxon>Euteleostomi</taxon>
        <taxon>Mammalia</taxon>
        <taxon>Eutheria</taxon>
        <taxon>Euarchontoglires</taxon>
        <taxon>Primates</taxon>
        <taxon>Haplorrhini</taxon>
        <taxon>Catarrhini</taxon>
        <taxon>Hominidae</taxon>
        <taxon>Homo</taxon>
    </lineage>
</organism>
<sequence length="229" mass="25728">MSEKENNFPPLPKFIPVKPCFYQNFSDEIPVEHQVLVKRIYRLWMFYCATLGVNLIACLAWWIGGGSGTNFGLAFVWLLLFTPCGYVCWFRPVYKAFRADSSFNFMAFFFIFGAQFVLTVIQAIGFSGWGACGWLSAIGFFQYSPGAAVVMLLPAIMFSVSAAMMAIAIMKVHRIYRGAGGSFQKAQTEWNTGTWRNPPSREAQYNNFSGNSLPEYPTVPSYPGSGQWP</sequence>
<keyword id="KW-0025">Alternative splicing</keyword>
<keyword id="KW-0472">Membrane</keyword>
<keyword id="KW-0597">Phosphoprotein</keyword>
<keyword id="KW-0653">Protein transport</keyword>
<keyword id="KW-1267">Proteomics identification</keyword>
<keyword id="KW-1185">Reference proteome</keyword>
<keyword id="KW-0812">Transmembrane</keyword>
<keyword id="KW-1133">Transmembrane helix</keyword>
<keyword id="KW-0813">Transport</keyword>
<reference key="1">
    <citation type="journal article" date="2004" name="Nat. Genet.">
        <title>Complete sequencing and characterization of 21,243 full-length human cDNAs.</title>
        <authorList>
            <person name="Ota T."/>
            <person name="Suzuki Y."/>
            <person name="Nishikawa T."/>
            <person name="Otsuki T."/>
            <person name="Sugiyama T."/>
            <person name="Irie R."/>
            <person name="Wakamatsu A."/>
            <person name="Hayashi K."/>
            <person name="Sato H."/>
            <person name="Nagai K."/>
            <person name="Kimura K."/>
            <person name="Makita H."/>
            <person name="Sekine M."/>
            <person name="Obayashi M."/>
            <person name="Nishi T."/>
            <person name="Shibahara T."/>
            <person name="Tanaka T."/>
            <person name="Ishii S."/>
            <person name="Yamamoto J."/>
            <person name="Saito K."/>
            <person name="Kawai Y."/>
            <person name="Isono Y."/>
            <person name="Nakamura Y."/>
            <person name="Nagahari K."/>
            <person name="Murakami K."/>
            <person name="Yasuda T."/>
            <person name="Iwayanagi T."/>
            <person name="Wagatsuma M."/>
            <person name="Shiratori A."/>
            <person name="Sudo H."/>
            <person name="Hosoiri T."/>
            <person name="Kaku Y."/>
            <person name="Kodaira H."/>
            <person name="Kondo H."/>
            <person name="Sugawara M."/>
            <person name="Takahashi M."/>
            <person name="Kanda K."/>
            <person name="Yokoi T."/>
            <person name="Furuya T."/>
            <person name="Kikkawa E."/>
            <person name="Omura Y."/>
            <person name="Abe K."/>
            <person name="Kamihara K."/>
            <person name="Katsuta N."/>
            <person name="Sato K."/>
            <person name="Tanikawa M."/>
            <person name="Yamazaki M."/>
            <person name="Ninomiya K."/>
            <person name="Ishibashi T."/>
            <person name="Yamashita H."/>
            <person name="Murakawa K."/>
            <person name="Fujimori K."/>
            <person name="Tanai H."/>
            <person name="Kimata M."/>
            <person name="Watanabe M."/>
            <person name="Hiraoka S."/>
            <person name="Chiba Y."/>
            <person name="Ishida S."/>
            <person name="Ono Y."/>
            <person name="Takiguchi S."/>
            <person name="Watanabe S."/>
            <person name="Yosida M."/>
            <person name="Hotuta T."/>
            <person name="Kusano J."/>
            <person name="Kanehori K."/>
            <person name="Takahashi-Fujii A."/>
            <person name="Hara H."/>
            <person name="Tanase T.-O."/>
            <person name="Nomura Y."/>
            <person name="Togiya S."/>
            <person name="Komai F."/>
            <person name="Hara R."/>
            <person name="Takeuchi K."/>
            <person name="Arita M."/>
            <person name="Imose N."/>
            <person name="Musashino K."/>
            <person name="Yuuki H."/>
            <person name="Oshima A."/>
            <person name="Sasaki N."/>
            <person name="Aotsuka S."/>
            <person name="Yoshikawa Y."/>
            <person name="Matsunawa H."/>
            <person name="Ichihara T."/>
            <person name="Shiohata N."/>
            <person name="Sano S."/>
            <person name="Moriya S."/>
            <person name="Momiyama H."/>
            <person name="Satoh N."/>
            <person name="Takami S."/>
            <person name="Terashima Y."/>
            <person name="Suzuki O."/>
            <person name="Nakagawa S."/>
            <person name="Senoh A."/>
            <person name="Mizoguchi H."/>
            <person name="Goto Y."/>
            <person name="Shimizu F."/>
            <person name="Wakebe H."/>
            <person name="Hishigaki H."/>
            <person name="Watanabe T."/>
            <person name="Sugiyama A."/>
            <person name="Takemoto M."/>
            <person name="Kawakami B."/>
            <person name="Yamazaki M."/>
            <person name="Watanabe K."/>
            <person name="Kumagai A."/>
            <person name="Itakura S."/>
            <person name="Fukuzumi Y."/>
            <person name="Fujimori Y."/>
            <person name="Komiyama M."/>
            <person name="Tashiro H."/>
            <person name="Tanigami A."/>
            <person name="Fujiwara T."/>
            <person name="Ono T."/>
            <person name="Yamada K."/>
            <person name="Fujii Y."/>
            <person name="Ozaki K."/>
            <person name="Hirao M."/>
            <person name="Ohmori Y."/>
            <person name="Kawabata A."/>
            <person name="Hikiji T."/>
            <person name="Kobatake N."/>
            <person name="Inagaki H."/>
            <person name="Ikema Y."/>
            <person name="Okamoto S."/>
            <person name="Okitani R."/>
            <person name="Kawakami T."/>
            <person name="Noguchi S."/>
            <person name="Itoh T."/>
            <person name="Shigeta K."/>
            <person name="Senba T."/>
            <person name="Matsumura K."/>
            <person name="Nakajima Y."/>
            <person name="Mizuno T."/>
            <person name="Morinaga M."/>
            <person name="Sasaki M."/>
            <person name="Togashi T."/>
            <person name="Oyama M."/>
            <person name="Hata H."/>
            <person name="Watanabe M."/>
            <person name="Komatsu T."/>
            <person name="Mizushima-Sugano J."/>
            <person name="Satoh T."/>
            <person name="Shirai Y."/>
            <person name="Takahashi Y."/>
            <person name="Nakagawa K."/>
            <person name="Okumura K."/>
            <person name="Nagase T."/>
            <person name="Nomura N."/>
            <person name="Kikuchi H."/>
            <person name="Masuho Y."/>
            <person name="Yamashita R."/>
            <person name="Nakai K."/>
            <person name="Yada T."/>
            <person name="Nakamura Y."/>
            <person name="Ohara O."/>
            <person name="Isogai T."/>
            <person name="Sugano S."/>
        </authorList>
    </citation>
    <scope>NUCLEOTIDE SEQUENCE [LARGE SCALE MRNA] (ISOFORMS 1; 2 AND 3)</scope>
</reference>
<reference key="2">
    <citation type="journal article" date="2004" name="Genome Res.">
        <title>The status, quality, and expansion of the NIH full-length cDNA project: the Mammalian Gene Collection (MGC).</title>
        <authorList>
            <consortium name="The MGC Project Team"/>
        </authorList>
    </citation>
    <scope>NUCLEOTIDE SEQUENCE [LARGE SCALE MRNA] (ISOFORM 1)</scope>
    <source>
        <tissue>Brain</tissue>
    </source>
</reference>
<reference key="3">
    <citation type="journal article" date="2013" name="J. Proteome Res.">
        <title>Toward a comprehensive characterization of a human cancer cell phosphoproteome.</title>
        <authorList>
            <person name="Zhou H."/>
            <person name="Di Palma S."/>
            <person name="Preisinger C."/>
            <person name="Peng M."/>
            <person name="Polat A.N."/>
            <person name="Heck A.J."/>
            <person name="Mohammed S."/>
        </authorList>
    </citation>
    <scope>PHOSPHORYLATION [LARGE SCALE ANALYSIS] AT THR-194</scope>
    <scope>IDENTIFICATION BY MASS SPECTROMETRY [LARGE SCALE ANALYSIS]</scope>
    <source>
        <tissue>Cervix carcinoma</tissue>
        <tissue>Erythroleukemia</tissue>
    </source>
</reference>
<gene>
    <name type="primary">SCAMP4</name>
</gene>
<accession>Q969E2</accession>
<accession>Q8N2N1</accession>
<accession>Q8NAV0</accession>
<proteinExistence type="evidence at protein level"/>
<name>SCAM4_HUMAN</name>